<comment type="function">
    <text evidence="1">Component of the small ribosomal subunit. The ribosome is a large ribonucleoprotein complex responsible for the synthesis of proteins in the cell. Required for rRNA maturation.</text>
</comment>
<comment type="subunit">
    <text evidence="1">Component of the small ribosomal subunit.</text>
</comment>
<comment type="subcellular location">
    <subcellularLocation>
        <location evidence="1">Cytoplasm</location>
        <location evidence="1">Cytoskeleton</location>
        <location evidence="1">Microtubule organizing center</location>
        <location evidence="1">Centrosome</location>
    </subcellularLocation>
    <subcellularLocation>
        <location evidence="1">Cytoplasm</location>
    </subcellularLocation>
    <subcellularLocation>
        <location evidence="1">Nucleus</location>
    </subcellularLocation>
</comment>
<comment type="similarity">
    <text evidence="2">Belongs to the eukaryotic ribosomal protein eS7 family.</text>
</comment>
<proteinExistence type="evidence at transcript level"/>
<name>RS7_ICTPU</name>
<gene>
    <name type="primary">rps7</name>
</gene>
<protein>
    <recommendedName>
        <fullName evidence="2">Small ribosomal subunit protein eS7</fullName>
    </recommendedName>
    <alternativeName>
        <fullName>40S ribosomal protein S7</fullName>
    </alternativeName>
</protein>
<sequence length="194" mass="22130">MFSSSAKIVKANGEKPDEFESGISQALLELEMNSDLKAQLRELNITAAKEIEVGGSRKAIIIFVPVPQLKAFQKIQVRLVRELEKKFSGKHVVFIAQRRILPKPTRKSRTKNKQKRPRSRTLTAVHDAILEDLVYPSEIVGKRIRVKLDSSRLIKVHLDKAQQNNVEHKVETFAGVYKKLTGKDVVFEFPEFQL</sequence>
<organism>
    <name type="scientific">Ictalurus punctatus</name>
    <name type="common">Channel catfish</name>
    <name type="synonym">Silurus punctatus</name>
    <dbReference type="NCBI Taxonomy" id="7998"/>
    <lineage>
        <taxon>Eukaryota</taxon>
        <taxon>Metazoa</taxon>
        <taxon>Chordata</taxon>
        <taxon>Craniata</taxon>
        <taxon>Vertebrata</taxon>
        <taxon>Euteleostomi</taxon>
        <taxon>Actinopterygii</taxon>
        <taxon>Neopterygii</taxon>
        <taxon>Teleostei</taxon>
        <taxon>Ostariophysi</taxon>
        <taxon>Siluriformes</taxon>
        <taxon>Ictaluridae</taxon>
        <taxon>Ictalurus</taxon>
    </lineage>
</organism>
<dbReference type="EMBL" id="AF402815">
    <property type="protein sequence ID" value="AAK95189.1"/>
    <property type="molecule type" value="mRNA"/>
</dbReference>
<dbReference type="RefSeq" id="NP_001187072.1">
    <property type="nucleotide sequence ID" value="NM_001200143.2"/>
</dbReference>
<dbReference type="SMR" id="Q90YR7"/>
<dbReference type="STRING" id="7998.ENSIPUP00000034369"/>
<dbReference type="Ensembl" id="ENSIPUT00015026895">
    <property type="protein sequence ID" value="ENSIPUP00015021409"/>
    <property type="gene ID" value="ENSIPUG00015012315"/>
</dbReference>
<dbReference type="GeneID" id="100304561"/>
<dbReference type="KEGG" id="ipu:100304561"/>
<dbReference type="CTD" id="6201"/>
<dbReference type="OMA" id="AAYHKVQ"/>
<dbReference type="OrthoDB" id="1724687at2759"/>
<dbReference type="Proteomes" id="UP000221080">
    <property type="component" value="Chromosome 25"/>
</dbReference>
<dbReference type="GO" id="GO:0030686">
    <property type="term" value="C:90S preribosome"/>
    <property type="evidence" value="ECO:0007669"/>
    <property type="project" value="TreeGrafter"/>
</dbReference>
<dbReference type="GO" id="GO:0005813">
    <property type="term" value="C:centrosome"/>
    <property type="evidence" value="ECO:0007669"/>
    <property type="project" value="UniProtKB-SubCell"/>
</dbReference>
<dbReference type="GO" id="GO:0022627">
    <property type="term" value="C:cytosolic small ribosomal subunit"/>
    <property type="evidence" value="ECO:0007669"/>
    <property type="project" value="TreeGrafter"/>
</dbReference>
<dbReference type="GO" id="GO:0005634">
    <property type="term" value="C:nucleus"/>
    <property type="evidence" value="ECO:0007669"/>
    <property type="project" value="UniProtKB-SubCell"/>
</dbReference>
<dbReference type="GO" id="GO:0032040">
    <property type="term" value="C:small-subunit processome"/>
    <property type="evidence" value="ECO:0007669"/>
    <property type="project" value="TreeGrafter"/>
</dbReference>
<dbReference type="GO" id="GO:0003735">
    <property type="term" value="F:structural constituent of ribosome"/>
    <property type="evidence" value="ECO:0007669"/>
    <property type="project" value="InterPro"/>
</dbReference>
<dbReference type="GO" id="GO:0043009">
    <property type="term" value="P:chordate embryonic development"/>
    <property type="evidence" value="ECO:0007669"/>
    <property type="project" value="Ensembl"/>
</dbReference>
<dbReference type="GO" id="GO:0030097">
    <property type="term" value="P:hemopoiesis"/>
    <property type="evidence" value="ECO:0007669"/>
    <property type="project" value="Ensembl"/>
</dbReference>
<dbReference type="GO" id="GO:0051726">
    <property type="term" value="P:regulation of cell cycle"/>
    <property type="evidence" value="ECO:0007669"/>
    <property type="project" value="Ensembl"/>
</dbReference>
<dbReference type="GO" id="GO:0042274">
    <property type="term" value="P:ribosomal small subunit biogenesis"/>
    <property type="evidence" value="ECO:0007669"/>
    <property type="project" value="TreeGrafter"/>
</dbReference>
<dbReference type="GO" id="GO:0006364">
    <property type="term" value="P:rRNA processing"/>
    <property type="evidence" value="ECO:0007669"/>
    <property type="project" value="TreeGrafter"/>
</dbReference>
<dbReference type="GO" id="GO:0006412">
    <property type="term" value="P:translation"/>
    <property type="evidence" value="ECO:0007669"/>
    <property type="project" value="InterPro"/>
</dbReference>
<dbReference type="InterPro" id="IPR000554">
    <property type="entry name" value="Ribosomal_eS7"/>
</dbReference>
<dbReference type="InterPro" id="IPR047861">
    <property type="entry name" value="Ribosomal_eS7_CS"/>
</dbReference>
<dbReference type="PANTHER" id="PTHR11278">
    <property type="entry name" value="40S RIBOSOMAL PROTEIN S7"/>
    <property type="match status" value="1"/>
</dbReference>
<dbReference type="PANTHER" id="PTHR11278:SF0">
    <property type="entry name" value="SMALL RIBOSOMAL SUBUNIT PROTEIN ES7"/>
    <property type="match status" value="1"/>
</dbReference>
<dbReference type="Pfam" id="PF01251">
    <property type="entry name" value="Ribosomal_S7e"/>
    <property type="match status" value="1"/>
</dbReference>
<dbReference type="PROSITE" id="PS00948">
    <property type="entry name" value="RIBOSOMAL_S7E"/>
    <property type="match status" value="1"/>
</dbReference>
<evidence type="ECO:0000250" key="1">
    <source>
        <dbReference type="UniProtKB" id="P62081"/>
    </source>
</evidence>
<evidence type="ECO:0000305" key="2"/>
<feature type="chain" id="PRO_0000174195" description="Small ribosomal subunit protein eS7">
    <location>
        <begin position="1"/>
        <end position="194"/>
    </location>
</feature>
<accession>Q90YR7</accession>
<keyword id="KW-0963">Cytoplasm</keyword>
<keyword id="KW-0206">Cytoskeleton</keyword>
<keyword id="KW-0539">Nucleus</keyword>
<keyword id="KW-0687">Ribonucleoprotein</keyword>
<keyword id="KW-0689">Ribosomal protein</keyword>
<reference key="1">
    <citation type="journal article" date="2002" name="Gene">
        <title>Translational machinery of channel catfish: I. A transcriptomic approach to the analysis of 32 40S ribosomal protein genes and their expression.</title>
        <authorList>
            <person name="Karsi A."/>
            <person name="Patterson A."/>
            <person name="Feng J."/>
            <person name="Liu Z.-J."/>
        </authorList>
    </citation>
    <scope>NUCLEOTIDE SEQUENCE [MRNA]</scope>
</reference>